<feature type="chain" id="PRO_1000025785" description="Chaperonin GroEL">
    <location>
        <begin position="1"/>
        <end position="540"/>
    </location>
</feature>
<feature type="binding site" evidence="1">
    <location>
        <begin position="29"/>
        <end position="32"/>
    </location>
    <ligand>
        <name>ATP</name>
        <dbReference type="ChEBI" id="CHEBI:30616"/>
    </ligand>
</feature>
<feature type="binding site" evidence="1">
    <location>
        <begin position="86"/>
        <end position="90"/>
    </location>
    <ligand>
        <name>ATP</name>
        <dbReference type="ChEBI" id="CHEBI:30616"/>
    </ligand>
</feature>
<feature type="binding site" evidence="1">
    <location>
        <position position="413"/>
    </location>
    <ligand>
        <name>ATP</name>
        <dbReference type="ChEBI" id="CHEBI:30616"/>
    </ligand>
</feature>
<feature type="binding site" evidence="1">
    <location>
        <begin position="476"/>
        <end position="478"/>
    </location>
    <ligand>
        <name>ATP</name>
        <dbReference type="ChEBI" id="CHEBI:30616"/>
    </ligand>
</feature>
<feature type="binding site" evidence="1">
    <location>
        <position position="492"/>
    </location>
    <ligand>
        <name>ATP</name>
        <dbReference type="ChEBI" id="CHEBI:30616"/>
    </ligand>
</feature>
<protein>
    <recommendedName>
        <fullName evidence="1">Chaperonin GroEL</fullName>
        <ecNumber evidence="1">5.6.1.7</ecNumber>
    </recommendedName>
    <alternativeName>
        <fullName evidence="1">60 kDa chaperonin</fullName>
    </alternativeName>
    <alternativeName>
        <fullName evidence="1">Chaperonin-60</fullName>
        <shortName evidence="1">Cpn60</shortName>
    </alternativeName>
</protein>
<comment type="function">
    <text evidence="1">Together with its co-chaperonin GroES, plays an essential role in assisting protein folding. The GroEL-GroES system forms a nano-cage that allows encapsulation of the non-native substrate proteins and provides a physical environment optimized to promote and accelerate protein folding.</text>
</comment>
<comment type="catalytic activity">
    <reaction evidence="1">
        <text>ATP + H2O + a folded polypeptide = ADP + phosphate + an unfolded polypeptide.</text>
        <dbReference type="EC" id="5.6.1.7"/>
    </reaction>
</comment>
<comment type="subunit">
    <text evidence="1">Forms a cylinder of 14 subunits composed of two heptameric rings stacked back-to-back. Interacts with the co-chaperonin GroES.</text>
</comment>
<comment type="subcellular location">
    <subcellularLocation>
        <location evidence="1">Cytoplasm</location>
    </subcellularLocation>
</comment>
<comment type="similarity">
    <text evidence="1">Belongs to the chaperonin (HSP60) family.</text>
</comment>
<reference key="1">
    <citation type="journal article" date="2007" name="Proc. Natl. Acad. Sci. U.S.A.">
        <title>Genome and proteome of long-chain alkane degrading Geobacillus thermodenitrificans NG80-2 isolated from a deep-subsurface oil reservoir.</title>
        <authorList>
            <person name="Feng L."/>
            <person name="Wang W."/>
            <person name="Cheng J."/>
            <person name="Ren Y."/>
            <person name="Zhao G."/>
            <person name="Gao C."/>
            <person name="Tang Y."/>
            <person name="Liu X."/>
            <person name="Han W."/>
            <person name="Peng X."/>
            <person name="Liu R."/>
            <person name="Wang L."/>
        </authorList>
    </citation>
    <scope>NUCLEOTIDE SEQUENCE [LARGE SCALE GENOMIC DNA]</scope>
    <source>
        <strain>NG80-2</strain>
    </source>
</reference>
<proteinExistence type="inferred from homology"/>
<evidence type="ECO:0000255" key="1">
    <source>
        <dbReference type="HAMAP-Rule" id="MF_00600"/>
    </source>
</evidence>
<dbReference type="EC" id="5.6.1.7" evidence="1"/>
<dbReference type="EMBL" id="CP000557">
    <property type="protein sequence ID" value="ABO65607.1"/>
    <property type="molecule type" value="Genomic_DNA"/>
</dbReference>
<dbReference type="RefSeq" id="WP_008882015.1">
    <property type="nucleotide sequence ID" value="NC_009328.1"/>
</dbReference>
<dbReference type="SMR" id="A4IJV3"/>
<dbReference type="KEGG" id="gtn:GTNG_0223"/>
<dbReference type="eggNOG" id="COG0459">
    <property type="taxonomic scope" value="Bacteria"/>
</dbReference>
<dbReference type="HOGENOM" id="CLU_016503_3_0_9"/>
<dbReference type="Proteomes" id="UP000001578">
    <property type="component" value="Chromosome"/>
</dbReference>
<dbReference type="GO" id="GO:0005737">
    <property type="term" value="C:cytoplasm"/>
    <property type="evidence" value="ECO:0007669"/>
    <property type="project" value="UniProtKB-SubCell"/>
</dbReference>
<dbReference type="GO" id="GO:0005524">
    <property type="term" value="F:ATP binding"/>
    <property type="evidence" value="ECO:0007669"/>
    <property type="project" value="UniProtKB-UniRule"/>
</dbReference>
<dbReference type="GO" id="GO:0140662">
    <property type="term" value="F:ATP-dependent protein folding chaperone"/>
    <property type="evidence" value="ECO:0007669"/>
    <property type="project" value="InterPro"/>
</dbReference>
<dbReference type="GO" id="GO:0016853">
    <property type="term" value="F:isomerase activity"/>
    <property type="evidence" value="ECO:0007669"/>
    <property type="project" value="UniProtKB-KW"/>
</dbReference>
<dbReference type="GO" id="GO:0051082">
    <property type="term" value="F:unfolded protein binding"/>
    <property type="evidence" value="ECO:0007669"/>
    <property type="project" value="UniProtKB-UniRule"/>
</dbReference>
<dbReference type="GO" id="GO:0042026">
    <property type="term" value="P:protein refolding"/>
    <property type="evidence" value="ECO:0007669"/>
    <property type="project" value="UniProtKB-UniRule"/>
</dbReference>
<dbReference type="CDD" id="cd03344">
    <property type="entry name" value="GroEL"/>
    <property type="match status" value="1"/>
</dbReference>
<dbReference type="FunFam" id="1.10.560.10:FF:000001">
    <property type="entry name" value="60 kDa chaperonin"/>
    <property type="match status" value="1"/>
</dbReference>
<dbReference type="FunFam" id="3.50.7.10:FF:000001">
    <property type="entry name" value="60 kDa chaperonin"/>
    <property type="match status" value="1"/>
</dbReference>
<dbReference type="Gene3D" id="3.50.7.10">
    <property type="entry name" value="GroEL"/>
    <property type="match status" value="1"/>
</dbReference>
<dbReference type="Gene3D" id="1.10.560.10">
    <property type="entry name" value="GroEL-like equatorial domain"/>
    <property type="match status" value="1"/>
</dbReference>
<dbReference type="Gene3D" id="3.30.260.10">
    <property type="entry name" value="TCP-1-like chaperonin intermediate domain"/>
    <property type="match status" value="1"/>
</dbReference>
<dbReference type="HAMAP" id="MF_00600">
    <property type="entry name" value="CH60"/>
    <property type="match status" value="1"/>
</dbReference>
<dbReference type="InterPro" id="IPR018370">
    <property type="entry name" value="Chaperonin_Cpn60_CS"/>
</dbReference>
<dbReference type="InterPro" id="IPR001844">
    <property type="entry name" value="Cpn60/GroEL"/>
</dbReference>
<dbReference type="InterPro" id="IPR002423">
    <property type="entry name" value="Cpn60/GroEL/TCP-1"/>
</dbReference>
<dbReference type="InterPro" id="IPR027409">
    <property type="entry name" value="GroEL-like_apical_dom_sf"/>
</dbReference>
<dbReference type="InterPro" id="IPR027413">
    <property type="entry name" value="GROEL-like_equatorial_sf"/>
</dbReference>
<dbReference type="InterPro" id="IPR027410">
    <property type="entry name" value="TCP-1-like_intermed_sf"/>
</dbReference>
<dbReference type="NCBIfam" id="TIGR02348">
    <property type="entry name" value="GroEL"/>
    <property type="match status" value="1"/>
</dbReference>
<dbReference type="NCBIfam" id="NF000592">
    <property type="entry name" value="PRK00013.1"/>
    <property type="match status" value="1"/>
</dbReference>
<dbReference type="NCBIfam" id="NF009487">
    <property type="entry name" value="PRK12849.1"/>
    <property type="match status" value="1"/>
</dbReference>
<dbReference type="NCBIfam" id="NF009488">
    <property type="entry name" value="PRK12850.1"/>
    <property type="match status" value="1"/>
</dbReference>
<dbReference type="NCBIfam" id="NF009489">
    <property type="entry name" value="PRK12851.1"/>
    <property type="match status" value="1"/>
</dbReference>
<dbReference type="PANTHER" id="PTHR45633">
    <property type="entry name" value="60 KDA HEAT SHOCK PROTEIN, MITOCHONDRIAL"/>
    <property type="match status" value="1"/>
</dbReference>
<dbReference type="Pfam" id="PF00118">
    <property type="entry name" value="Cpn60_TCP1"/>
    <property type="match status" value="1"/>
</dbReference>
<dbReference type="PRINTS" id="PR00298">
    <property type="entry name" value="CHAPERONIN60"/>
</dbReference>
<dbReference type="SUPFAM" id="SSF52029">
    <property type="entry name" value="GroEL apical domain-like"/>
    <property type="match status" value="1"/>
</dbReference>
<dbReference type="SUPFAM" id="SSF48592">
    <property type="entry name" value="GroEL equatorial domain-like"/>
    <property type="match status" value="1"/>
</dbReference>
<dbReference type="SUPFAM" id="SSF54849">
    <property type="entry name" value="GroEL-intermediate domain like"/>
    <property type="match status" value="1"/>
</dbReference>
<dbReference type="PROSITE" id="PS00296">
    <property type="entry name" value="CHAPERONINS_CPN60"/>
    <property type="match status" value="1"/>
</dbReference>
<organism>
    <name type="scientific">Geobacillus thermodenitrificans (strain NG80-2)</name>
    <dbReference type="NCBI Taxonomy" id="420246"/>
    <lineage>
        <taxon>Bacteria</taxon>
        <taxon>Bacillati</taxon>
        <taxon>Bacillota</taxon>
        <taxon>Bacilli</taxon>
        <taxon>Bacillales</taxon>
        <taxon>Anoxybacillaceae</taxon>
        <taxon>Geobacillus</taxon>
    </lineage>
</organism>
<keyword id="KW-0067">ATP-binding</keyword>
<keyword id="KW-0143">Chaperone</keyword>
<keyword id="KW-0963">Cytoplasm</keyword>
<keyword id="KW-0413">Isomerase</keyword>
<keyword id="KW-0547">Nucleotide-binding</keyword>
<sequence length="540" mass="57385">MAKEIKFSEEARRAMLRGVDKLADAVKVTLGPKGRNVVLEKKFGSPLITNDGVTIAKEIELEDPFENMGAKLVAEVASKTNDIAGDGTTTATVLAQAMIREGLKNVAAGANPMGIRRGIEKAVAVAVEELKAISKPIKGKESIAQVAAISAADEEVGQLIAEAMERVGNDGVITLEESKGFTTELDVVEGMQFDRGYVSPYMITDTEKMEAVLENPYILITDKKVSNIQELLPVLEQVVQQGRPLLIIAEDVEGEALATLVVNKLRGTFNAVAVKAPGFGDRRKAMLEDIAILTGGEVISEELGRELKSTTVASLGRASKVVVTKETTTIVEGAGDSERIKARINQIRAQLEETTSEFDREKLQERLAKLAGGVAVIKVGAATETELKERKLRIEDALNSTRAAVEEGIVAGGGTALMNVYSKVAAIEAEGDEATGVKIVLRAIEEPVRQIAQNAGLEGSIIVERLKNEKAGIGFNAATGEWVDMIEEGIVDPTKVTRSALQNAASVAAMVLTTEAVVADKPEENKGGANPGMPDMGGMM</sequence>
<gene>
    <name evidence="1" type="primary">groEL</name>
    <name evidence="1" type="synonym">groL</name>
    <name type="ordered locus">GTNG_0223</name>
</gene>
<accession>A4IJV3</accession>
<name>CH60_GEOTN</name>